<sequence length="367" mass="40628">MSSRRSVGDPEYLTRRIPQNPRYQHIKTRLDTGSSLTKYIEKLEEIKRNYRYRKDELFKRLKVTTFAQLVVQVASLSDETLEVTNEEIHKLEGGNSPASDADAELTAGTNGKGSPNGTPPSPVLFINNAGAGESYRSTLQSLISGVGELDIEKDTHKKADTQAKDTPYPDCPFLLLDVRDRDAYDQCHIVGAYSYPIAMLSRAMNPYTNSILEYKNAHGKIIILYDDDERLASQAATTMCERGFENLFMLSGGLKVLAQKVPEGLITGSLPISCQVAAPTGSARKKPVPKVPPTRAESKWRYSAEDLQKIKYYLEEEQLPSDTASRLSRGSSGRDSKATTARSSPSLPSTAGSRMLSRSSIQNRPWK</sequence>
<proteinExistence type="inferred from homology"/>
<evidence type="ECO:0000250" key="1"/>
<evidence type="ECO:0000255" key="2">
    <source>
        <dbReference type="PROSITE-ProRule" id="PRU00173"/>
    </source>
</evidence>
<evidence type="ECO:0000256" key="3">
    <source>
        <dbReference type="SAM" id="MobiDB-lite"/>
    </source>
</evidence>
<evidence type="ECO:0000305" key="4"/>
<protein>
    <recommendedName>
        <fullName>Centrosomal protein of 41 kDa</fullName>
        <shortName>Cep41</shortName>
    </recommendedName>
</protein>
<accession>E1C065</accession>
<gene>
    <name type="primary">CEP41</name>
</gene>
<comment type="function">
    <text evidence="1">Required during ciliogenesis for tubulin glutamylation in cilium. Probably acts by participating in the transport of tubulin polyglutamylases between the basal body and the cilium (By similarity).</text>
</comment>
<comment type="subcellular location">
    <subcellularLocation>
        <location evidence="1">Cytoplasm</location>
        <location evidence="1">Cytoskeleton</location>
        <location evidence="1">Microtubule organizing center</location>
        <location evidence="1">Centrosome</location>
    </subcellularLocation>
    <subcellularLocation>
        <location evidence="1">Cell projection</location>
        <location evidence="1">Cilium</location>
    </subcellularLocation>
    <subcellularLocation>
        <location evidence="1">Cytoplasm</location>
        <location evidence="1">Cytoskeleton</location>
        <location evidence="1">Cilium basal body</location>
    </subcellularLocation>
    <text evidence="1">Localizes mainly to the cilium basal body and in primary cilia.</text>
</comment>
<comment type="similarity">
    <text evidence="4">Belongs to the CEP41 family.</text>
</comment>
<reference key="1">
    <citation type="journal article" date="2004" name="Nature">
        <title>Sequence and comparative analysis of the chicken genome provide unique perspectives on vertebrate evolution.</title>
        <authorList>
            <person name="Hillier L.W."/>
            <person name="Miller W."/>
            <person name="Birney E."/>
            <person name="Warren W."/>
            <person name="Hardison R.C."/>
            <person name="Ponting C.P."/>
            <person name="Bork P."/>
            <person name="Burt D.W."/>
            <person name="Groenen M.A.M."/>
            <person name="Delany M.E."/>
            <person name="Dodgson J.B."/>
            <person name="Chinwalla A.T."/>
            <person name="Cliften P.F."/>
            <person name="Clifton S.W."/>
            <person name="Delehaunty K.D."/>
            <person name="Fronick C."/>
            <person name="Fulton R.S."/>
            <person name="Graves T.A."/>
            <person name="Kremitzki C."/>
            <person name="Layman D."/>
            <person name="Magrini V."/>
            <person name="McPherson J.D."/>
            <person name="Miner T.L."/>
            <person name="Minx P."/>
            <person name="Nash W.E."/>
            <person name="Nhan M.N."/>
            <person name="Nelson J.O."/>
            <person name="Oddy L.G."/>
            <person name="Pohl C.S."/>
            <person name="Randall-Maher J."/>
            <person name="Smith S.M."/>
            <person name="Wallis J.W."/>
            <person name="Yang S.-P."/>
            <person name="Romanov M.N."/>
            <person name="Rondelli C.M."/>
            <person name="Paton B."/>
            <person name="Smith J."/>
            <person name="Morrice D."/>
            <person name="Daniels L."/>
            <person name="Tempest H.G."/>
            <person name="Robertson L."/>
            <person name="Masabanda J.S."/>
            <person name="Griffin D.K."/>
            <person name="Vignal A."/>
            <person name="Fillon V."/>
            <person name="Jacobbson L."/>
            <person name="Kerje S."/>
            <person name="Andersson L."/>
            <person name="Crooijmans R.P."/>
            <person name="Aerts J."/>
            <person name="van der Poel J.J."/>
            <person name="Ellegren H."/>
            <person name="Caldwell R.B."/>
            <person name="Hubbard S.J."/>
            <person name="Grafham D.V."/>
            <person name="Kierzek A.M."/>
            <person name="McLaren S.R."/>
            <person name="Overton I.M."/>
            <person name="Arakawa H."/>
            <person name="Beattie K.J."/>
            <person name="Bezzubov Y."/>
            <person name="Boardman P.E."/>
            <person name="Bonfield J.K."/>
            <person name="Croning M.D.R."/>
            <person name="Davies R.M."/>
            <person name="Francis M.D."/>
            <person name="Humphray S.J."/>
            <person name="Scott C.E."/>
            <person name="Taylor R.G."/>
            <person name="Tickle C."/>
            <person name="Brown W.R.A."/>
            <person name="Rogers J."/>
            <person name="Buerstedde J.-M."/>
            <person name="Wilson S.A."/>
            <person name="Stubbs L."/>
            <person name="Ovcharenko I."/>
            <person name="Gordon L."/>
            <person name="Lucas S."/>
            <person name="Miller M.M."/>
            <person name="Inoko H."/>
            <person name="Shiina T."/>
            <person name="Kaufman J."/>
            <person name="Salomonsen J."/>
            <person name="Skjoedt K."/>
            <person name="Wong G.K.-S."/>
            <person name="Wang J."/>
            <person name="Liu B."/>
            <person name="Wang J."/>
            <person name="Yu J."/>
            <person name="Yang H."/>
            <person name="Nefedov M."/>
            <person name="Koriabine M."/>
            <person name="Dejong P.J."/>
            <person name="Goodstadt L."/>
            <person name="Webber C."/>
            <person name="Dickens N.J."/>
            <person name="Letunic I."/>
            <person name="Suyama M."/>
            <person name="Torrents D."/>
            <person name="von Mering C."/>
            <person name="Zdobnov E.M."/>
            <person name="Makova K."/>
            <person name="Nekrutenko A."/>
            <person name="Elnitski L."/>
            <person name="Eswara P."/>
            <person name="King D.C."/>
            <person name="Yang S.-P."/>
            <person name="Tyekucheva S."/>
            <person name="Radakrishnan A."/>
            <person name="Harris R.S."/>
            <person name="Chiaromonte F."/>
            <person name="Taylor J."/>
            <person name="He J."/>
            <person name="Rijnkels M."/>
            <person name="Griffiths-Jones S."/>
            <person name="Ureta-Vidal A."/>
            <person name="Hoffman M.M."/>
            <person name="Severin J."/>
            <person name="Searle S.M.J."/>
            <person name="Law A.S."/>
            <person name="Speed D."/>
            <person name="Waddington D."/>
            <person name="Cheng Z."/>
            <person name="Tuzun E."/>
            <person name="Eichler E."/>
            <person name="Bao Z."/>
            <person name="Flicek P."/>
            <person name="Shteynberg D.D."/>
            <person name="Brent M.R."/>
            <person name="Bye J.M."/>
            <person name="Huckle E.J."/>
            <person name="Chatterji S."/>
            <person name="Dewey C."/>
            <person name="Pachter L."/>
            <person name="Kouranov A."/>
            <person name="Mourelatos Z."/>
            <person name="Hatzigeorgiou A.G."/>
            <person name="Paterson A.H."/>
            <person name="Ivarie R."/>
            <person name="Brandstrom M."/>
            <person name="Axelsson E."/>
            <person name="Backstrom N."/>
            <person name="Berlin S."/>
            <person name="Webster M.T."/>
            <person name="Pourquie O."/>
            <person name="Reymond A."/>
            <person name="Ucla C."/>
            <person name="Antonarakis S.E."/>
            <person name="Long M."/>
            <person name="Emerson J.J."/>
            <person name="Betran E."/>
            <person name="Dupanloup I."/>
            <person name="Kaessmann H."/>
            <person name="Hinrichs A.S."/>
            <person name="Bejerano G."/>
            <person name="Furey T.S."/>
            <person name="Harte R.A."/>
            <person name="Raney B."/>
            <person name="Siepel A."/>
            <person name="Kent W.J."/>
            <person name="Haussler D."/>
            <person name="Eyras E."/>
            <person name="Castelo R."/>
            <person name="Abril J.F."/>
            <person name="Castellano S."/>
            <person name="Camara F."/>
            <person name="Parra G."/>
            <person name="Guigo R."/>
            <person name="Bourque G."/>
            <person name="Tesler G."/>
            <person name="Pevzner P.A."/>
            <person name="Smit A."/>
            <person name="Fulton L.A."/>
            <person name="Mardis E.R."/>
            <person name="Wilson R.K."/>
        </authorList>
    </citation>
    <scope>NUCLEOTIDE SEQUENCE [LARGE SCALE GENOMIC DNA]</scope>
    <source>
        <strain>Red jungle fowl</strain>
    </source>
</reference>
<keyword id="KW-0966">Cell projection</keyword>
<keyword id="KW-1186">Ciliopathy</keyword>
<keyword id="KW-0969">Cilium</keyword>
<keyword id="KW-0970">Cilium biogenesis/degradation</keyword>
<keyword id="KW-0963">Cytoplasm</keyword>
<keyword id="KW-0206">Cytoskeleton</keyword>
<keyword id="KW-0653">Protein transport</keyword>
<keyword id="KW-1185">Reference proteome</keyword>
<keyword id="KW-0813">Transport</keyword>
<feature type="chain" id="PRO_0000416266" description="Centrosomal protein of 41 kDa">
    <location>
        <begin position="1"/>
        <end position="367"/>
    </location>
</feature>
<feature type="domain" description="Rhodanese" evidence="2">
    <location>
        <begin position="169"/>
        <end position="266"/>
    </location>
</feature>
<feature type="region of interest" description="Disordered" evidence="3">
    <location>
        <begin position="89"/>
        <end position="121"/>
    </location>
</feature>
<feature type="region of interest" description="Disordered" evidence="3">
    <location>
        <begin position="319"/>
        <end position="367"/>
    </location>
</feature>
<feature type="compositionally biased region" description="Polar residues" evidence="3">
    <location>
        <begin position="107"/>
        <end position="116"/>
    </location>
</feature>
<feature type="compositionally biased region" description="Polar residues" evidence="3">
    <location>
        <begin position="338"/>
        <end position="367"/>
    </location>
</feature>
<dbReference type="EMBL" id="AADN02039802">
    <property type="status" value="NOT_ANNOTATED_CDS"/>
    <property type="molecule type" value="Genomic_DNA"/>
</dbReference>
<dbReference type="RefSeq" id="NP_001186322.1">
    <property type="nucleotide sequence ID" value="NM_001199393.1"/>
</dbReference>
<dbReference type="SMR" id="E1C065"/>
<dbReference type="FunCoup" id="E1C065">
    <property type="interactions" value="308"/>
</dbReference>
<dbReference type="STRING" id="9031.ENSGALP00000013137"/>
<dbReference type="PaxDb" id="9031-ENSGALP00000013137"/>
<dbReference type="GeneID" id="416684"/>
<dbReference type="KEGG" id="gga:416684"/>
<dbReference type="CTD" id="95681"/>
<dbReference type="VEuPathDB" id="HostDB:geneid_416684"/>
<dbReference type="eggNOG" id="ENOG502QR8A">
    <property type="taxonomic scope" value="Eukaryota"/>
</dbReference>
<dbReference type="HOGENOM" id="CLU_064316_0_0_1"/>
<dbReference type="InParanoid" id="E1C065"/>
<dbReference type="OrthoDB" id="70250at2759"/>
<dbReference type="PhylomeDB" id="E1C065"/>
<dbReference type="TreeFam" id="TF324682"/>
<dbReference type="Reactome" id="R-GGA-2565942">
    <property type="pathway name" value="Regulation of PLK1 Activity at G2/M Transition"/>
</dbReference>
<dbReference type="Reactome" id="R-GGA-380259">
    <property type="pathway name" value="Loss of Nlp from mitotic centrosomes"/>
</dbReference>
<dbReference type="Reactome" id="R-GGA-380270">
    <property type="pathway name" value="Recruitment of mitotic centrosome proteins and complexes"/>
</dbReference>
<dbReference type="Reactome" id="R-GGA-380284">
    <property type="pathway name" value="Loss of proteins required for interphase microtubule organization from the centrosome"/>
</dbReference>
<dbReference type="Reactome" id="R-GGA-380320">
    <property type="pathway name" value="Recruitment of NuMA to mitotic centrosomes"/>
</dbReference>
<dbReference type="Reactome" id="R-GGA-5620912">
    <property type="pathway name" value="Anchoring of the basal body to the plasma membrane"/>
</dbReference>
<dbReference type="Reactome" id="R-GGA-8854518">
    <property type="pathway name" value="AURKA Activation by TPX2"/>
</dbReference>
<dbReference type="PRO" id="PR:E1C065"/>
<dbReference type="Proteomes" id="UP000000539">
    <property type="component" value="Chromosome 1"/>
</dbReference>
<dbReference type="Bgee" id="ENSGALG00000008103">
    <property type="expression patterns" value="Expressed in testis and 13 other cell types or tissues"/>
</dbReference>
<dbReference type="GO" id="GO:0005814">
    <property type="term" value="C:centriole"/>
    <property type="evidence" value="ECO:0000250"/>
    <property type="project" value="UniProtKB"/>
</dbReference>
<dbReference type="GO" id="GO:0005813">
    <property type="term" value="C:centrosome"/>
    <property type="evidence" value="ECO:0007669"/>
    <property type="project" value="UniProtKB-SubCell"/>
</dbReference>
<dbReference type="GO" id="GO:0036064">
    <property type="term" value="C:ciliary basal body"/>
    <property type="evidence" value="ECO:0000250"/>
    <property type="project" value="UniProtKB"/>
</dbReference>
<dbReference type="GO" id="GO:0005929">
    <property type="term" value="C:cilium"/>
    <property type="evidence" value="ECO:0000250"/>
    <property type="project" value="UniProtKB"/>
</dbReference>
<dbReference type="GO" id="GO:0005737">
    <property type="term" value="C:cytoplasm"/>
    <property type="evidence" value="ECO:0007669"/>
    <property type="project" value="UniProtKB-KW"/>
</dbReference>
<dbReference type="GO" id="GO:0060271">
    <property type="term" value="P:cilium assembly"/>
    <property type="evidence" value="ECO:0000250"/>
    <property type="project" value="UniProtKB"/>
</dbReference>
<dbReference type="GO" id="GO:0018095">
    <property type="term" value="P:protein polyglutamylation"/>
    <property type="evidence" value="ECO:0000250"/>
    <property type="project" value="UniProtKB"/>
</dbReference>
<dbReference type="GO" id="GO:0015031">
    <property type="term" value="P:protein transport"/>
    <property type="evidence" value="ECO:0007669"/>
    <property type="project" value="UniProtKB-KW"/>
</dbReference>
<dbReference type="CDD" id="cd00158">
    <property type="entry name" value="RHOD"/>
    <property type="match status" value="1"/>
</dbReference>
<dbReference type="FunFam" id="3.40.250.10:FF:000012">
    <property type="entry name" value="Centrosomal protein of 41 kDa"/>
    <property type="match status" value="1"/>
</dbReference>
<dbReference type="Gene3D" id="3.40.250.10">
    <property type="entry name" value="Rhodanese-like domain"/>
    <property type="match status" value="1"/>
</dbReference>
<dbReference type="InterPro" id="IPR051889">
    <property type="entry name" value="CEP41"/>
</dbReference>
<dbReference type="InterPro" id="IPR001763">
    <property type="entry name" value="Rhodanese-like_dom"/>
</dbReference>
<dbReference type="InterPro" id="IPR036873">
    <property type="entry name" value="Rhodanese-like_dom_sf"/>
</dbReference>
<dbReference type="PANTHER" id="PTHR44390">
    <property type="entry name" value="CENTROSOMAL PROTEIN OF 41 KDA"/>
    <property type="match status" value="1"/>
</dbReference>
<dbReference type="PANTHER" id="PTHR44390:SF1">
    <property type="entry name" value="CENTROSOMAL PROTEIN OF 41 KDA"/>
    <property type="match status" value="1"/>
</dbReference>
<dbReference type="Pfam" id="PF00581">
    <property type="entry name" value="Rhodanese"/>
    <property type="match status" value="1"/>
</dbReference>
<dbReference type="SMART" id="SM00450">
    <property type="entry name" value="RHOD"/>
    <property type="match status" value="1"/>
</dbReference>
<dbReference type="SUPFAM" id="SSF52821">
    <property type="entry name" value="Rhodanese/Cell cycle control phosphatase"/>
    <property type="match status" value="1"/>
</dbReference>
<dbReference type="PROSITE" id="PS50206">
    <property type="entry name" value="RHODANESE_3"/>
    <property type="match status" value="1"/>
</dbReference>
<organism>
    <name type="scientific">Gallus gallus</name>
    <name type="common">Chicken</name>
    <dbReference type="NCBI Taxonomy" id="9031"/>
    <lineage>
        <taxon>Eukaryota</taxon>
        <taxon>Metazoa</taxon>
        <taxon>Chordata</taxon>
        <taxon>Craniata</taxon>
        <taxon>Vertebrata</taxon>
        <taxon>Euteleostomi</taxon>
        <taxon>Archelosauria</taxon>
        <taxon>Archosauria</taxon>
        <taxon>Dinosauria</taxon>
        <taxon>Saurischia</taxon>
        <taxon>Theropoda</taxon>
        <taxon>Coelurosauria</taxon>
        <taxon>Aves</taxon>
        <taxon>Neognathae</taxon>
        <taxon>Galloanserae</taxon>
        <taxon>Galliformes</taxon>
        <taxon>Phasianidae</taxon>
        <taxon>Phasianinae</taxon>
        <taxon>Gallus</taxon>
    </lineage>
</organism>
<name>CEP41_CHICK</name>